<name>ERYA3_SACER</name>
<feature type="initiator methionine" description="Removed" evidence="10">
    <location>
        <position position="1"/>
    </location>
</feature>
<feature type="chain" id="PRO_0000180295" description="Erythronolide synthase EryA3">
    <location>
        <begin position="2"/>
        <end position="3172"/>
    </location>
</feature>
<feature type="domain" description="Ketosynthase family 3 (KS3) 1" evidence="6">
    <location>
        <begin position="38"/>
        <end position="452"/>
    </location>
</feature>
<feature type="domain" description="Carrier 1" evidence="5">
    <location>
        <begin position="1392"/>
        <end position="1467"/>
    </location>
</feature>
<feature type="domain" description="Ketosynthase family 3 (KS3) 2" evidence="6">
    <location>
        <begin position="1489"/>
        <end position="1916"/>
    </location>
</feature>
<feature type="domain" description="Carrier 2" evidence="5">
    <location>
        <begin position="2819"/>
        <end position="2894"/>
    </location>
</feature>
<feature type="region of interest" description="Module 5" evidence="15">
    <location>
        <begin position="41"/>
        <end position="1464"/>
    </location>
</feature>
<feature type="region of interest" description="Acyltransferase 1" evidence="15">
    <location>
        <begin position="557"/>
        <end position="874"/>
    </location>
</feature>
<feature type="region of interest" description="Beta-ketoacyl reductase 1" evidence="15">
    <location>
        <begin position="1117"/>
        <end position="1294"/>
    </location>
</feature>
<feature type="region of interest" description="Module 6" evidence="15">
    <location>
        <begin position="1492"/>
        <end position="2891"/>
    </location>
</feature>
<feature type="region of interest" description="Acyltransferase 2" evidence="15">
    <location>
        <begin position="2022"/>
        <end position="2331"/>
    </location>
</feature>
<feature type="region of interest" description="Beta-ketoacyl reductase 2" evidence="15">
    <location>
        <begin position="2557"/>
        <end position="2731"/>
    </location>
</feature>
<feature type="region of interest" description="Thioesterase" evidence="15">
    <location>
        <begin position="2960"/>
        <end position="3166"/>
    </location>
</feature>
<feature type="active site" description="Acyl-thioester intermediate; for beta-ketoacyl synthase 1 activity" evidence="6 17">
    <location>
        <position position="199"/>
    </location>
</feature>
<feature type="active site" description="For beta-ketoacyl synthase 1 activity" evidence="6">
    <location>
        <position position="334"/>
    </location>
</feature>
<feature type="active site" description="For beta-ketoacyl synthase 1 activity" evidence="6">
    <location>
        <position position="374"/>
    </location>
</feature>
<feature type="active site" description="Acyl-ester intermediate; for acyltransferase 1 activity" evidence="7">
    <location>
        <position position="643"/>
    </location>
</feature>
<feature type="active site" description="Acyl-ester intermediate; for beta-ketoacyl reductase 1 activity" evidence="2 4">
    <location>
        <position position="1264"/>
    </location>
</feature>
<feature type="active site" description="Acyl-thioester intermediate; for beta-ketoacyl synthase 2 activity" evidence="6">
    <location>
        <position position="1661"/>
    </location>
</feature>
<feature type="active site" description="For beta-ketoacyl synthase 2 activity" evidence="6">
    <location>
        <position position="1797"/>
    </location>
</feature>
<feature type="active site" description="For beta-ketoacyl synthase 2 activity" evidence="6">
    <location>
        <position position="1837"/>
    </location>
</feature>
<feature type="active site" description="Acyl-ester intermediate; for acyltransferase 2 activity" evidence="7">
    <location>
        <position position="2112"/>
    </location>
</feature>
<feature type="active site" description="Acyl-ester intermediate; for beta-ketoacyl reductase 2 activity" evidence="15">
    <location>
        <position position="2701"/>
    </location>
</feature>
<feature type="active site" description="Nucleophile; for thioesterase activity" evidence="3 16 22">
    <location>
        <position position="3031"/>
    </location>
</feature>
<feature type="active site" description="Proton acceptor; for thioesterase activity" evidence="3 16 22">
    <location>
        <position position="3148"/>
    </location>
</feature>
<feature type="binding site" evidence="1">
    <location>
        <begin position="1125"/>
        <end position="1128"/>
    </location>
    <ligand>
        <name>NADP(+)</name>
        <dbReference type="ChEBI" id="CHEBI:58349"/>
        <label>1</label>
    </ligand>
</feature>
<feature type="binding site" evidence="1">
    <location>
        <begin position="1148"/>
        <end position="1151"/>
    </location>
    <ligand>
        <name>NADP(+)</name>
        <dbReference type="ChEBI" id="CHEBI:58349"/>
        <label>1</label>
    </ligand>
</feature>
<feature type="binding site" evidence="1">
    <location>
        <begin position="1177"/>
        <end position="1178"/>
    </location>
    <ligand>
        <name>NADP(+)</name>
        <dbReference type="ChEBI" id="CHEBI:58349"/>
        <label>1</label>
    </ligand>
</feature>
<feature type="binding site" evidence="1">
    <location>
        <position position="1229"/>
    </location>
    <ligand>
        <name>NADP(+)</name>
        <dbReference type="ChEBI" id="CHEBI:58349"/>
        <label>1</label>
    </ligand>
</feature>
<feature type="binding site" evidence="1">
    <location>
        <begin position="1249"/>
        <end position="1250"/>
    </location>
    <ligand>
        <name>NADP(+)</name>
        <dbReference type="ChEBI" id="CHEBI:58349"/>
        <label>1</label>
    </ligand>
</feature>
<feature type="binding site" evidence="15">
    <location>
        <begin position="2565"/>
        <end position="2568"/>
    </location>
    <ligand>
        <name>NADP(+)</name>
        <dbReference type="ChEBI" id="CHEBI:58349"/>
        <label>2</label>
    </ligand>
</feature>
<feature type="binding site" evidence="15">
    <location>
        <begin position="2588"/>
        <end position="2591"/>
    </location>
    <ligand>
        <name>NADP(+)</name>
        <dbReference type="ChEBI" id="CHEBI:58349"/>
        <label>2</label>
    </ligand>
</feature>
<feature type="binding site" evidence="15">
    <location>
        <begin position="2617"/>
        <end position="2618"/>
    </location>
    <ligand>
        <name>NADP(+)</name>
        <dbReference type="ChEBI" id="CHEBI:58349"/>
        <label>2</label>
    </ligand>
</feature>
<feature type="binding site" evidence="15">
    <location>
        <position position="2666"/>
    </location>
    <ligand>
        <name>NADP(+)</name>
        <dbReference type="ChEBI" id="CHEBI:58349"/>
        <label>2</label>
    </ligand>
</feature>
<feature type="binding site" evidence="15">
    <location>
        <begin position="2686"/>
        <end position="2687"/>
    </location>
    <ligand>
        <name>NADP(+)</name>
        <dbReference type="ChEBI" id="CHEBI:58349"/>
        <label>2</label>
    </ligand>
</feature>
<feature type="binding site" evidence="3">
    <location>
        <position position="2965"/>
    </location>
    <ligand>
        <name>substrate</name>
    </ligand>
</feature>
<feature type="binding site" evidence="13">
    <location>
        <position position="3032"/>
    </location>
    <ligand>
        <name>substrate</name>
    </ligand>
</feature>
<feature type="binding site" evidence="13">
    <location>
        <position position="3058"/>
    </location>
    <ligand>
        <name>substrate</name>
    </ligand>
</feature>
<feature type="site" description="Important for discrimination between malonyl and methylmalonyl polyketide chain extension units" evidence="17">
    <location>
        <position position="644"/>
    </location>
</feature>
<feature type="site" description="Important for discrimination between malonyl and methylmalonyl polyketide chain extension units" evidence="17">
    <location>
        <position position="744"/>
    </location>
</feature>
<feature type="modified residue" description="O-(pantetheine 4'-phosphoryl)serine" evidence="5">
    <location>
        <position position="1427"/>
    </location>
</feature>
<feature type="modified residue" description="O-(pantetheine 4'-phosphoryl)serine" evidence="5">
    <location>
        <position position="2854"/>
    </location>
</feature>
<feature type="sequence conflict" description="In Ref. 2; AAA26495." evidence="15" ref="2">
    <original>A</original>
    <variation>R</variation>
    <location>
        <position position="289"/>
    </location>
</feature>
<feature type="sequence conflict" description="In Ref. 1; CAA39583." evidence="15" ref="1">
    <original>PEPRNSLRDTGFTLATRASAMEHRA</original>
    <variation>ASRGTRCATPVSRWPPAAAPWEQ</variation>
    <location>
        <begin position="493"/>
        <end position="517"/>
    </location>
</feature>
<feature type="sequence conflict" description="In Ref. 2; AAA26495." evidence="15" ref="2">
    <original>P</original>
    <variation>R</variation>
    <location>
        <position position="493"/>
    </location>
</feature>
<feature type="sequence conflict" description="In Ref. 2; AAA26495." evidence="15" ref="2">
    <original>A</original>
    <variation>R</variation>
    <location>
        <position position="510"/>
    </location>
</feature>
<feature type="sequence conflict" description="In Ref. 2; AAA26495." evidence="15" ref="2">
    <original>M</original>
    <variation>W</variation>
    <location>
        <position position="513"/>
    </location>
</feature>
<feature type="sequence conflict" description="In Ref. 2; AAA26495." evidence="15" ref="2">
    <original>E</original>
    <variation>D</variation>
    <location>
        <position position="525"/>
    </location>
</feature>
<feature type="sequence conflict" description="In Ref. 2; AAA26495." evidence="15" ref="2">
    <original>R</original>
    <variation>G</variation>
    <location>
        <position position="536"/>
    </location>
</feature>
<feature type="sequence conflict" description="In Ref. 2; AAA26495." evidence="15" ref="2">
    <original>GPNSP</original>
    <variation>ARTR</variation>
    <location>
        <begin position="547"/>
        <end position="551"/>
    </location>
</feature>
<feature type="sequence conflict" description="In Ref. 2; AAA26495." evidence="15" ref="2">
    <original>R</original>
    <variation>A</variation>
    <location>
        <position position="673"/>
    </location>
</feature>
<feature type="sequence conflict" description="In Ref. 2; AAA26495." evidence="15" ref="2">
    <location>
        <position position="716"/>
    </location>
</feature>
<feature type="sequence conflict" description="In Ref. 2; AAA26495." evidence="15" ref="2">
    <original>AHK</original>
    <variation>GIT</variation>
    <location>
        <begin position="734"/>
        <end position="736"/>
    </location>
</feature>
<feature type="sequence conflict" description="In Ref. 1; CAA39583." evidence="15" ref="1">
    <original>R</original>
    <variation>RELPVYPFQRQR</variation>
    <location>
        <position position="896"/>
    </location>
</feature>
<feature type="sequence conflict" description="In Ref. 2; AAA26495." evidence="15" ref="2">
    <original>R</original>
    <variation>RQR</variation>
    <location>
        <position position="896"/>
    </location>
</feature>
<feature type="sequence conflict" description="In Ref. 2; AAA26495." evidence="15" ref="2">
    <original>GVAAVPH</original>
    <variation>VSLLSRD</variation>
    <location>
        <begin position="988"/>
        <end position="994"/>
    </location>
</feature>
<feature type="sequence conflict" description="In Ref. 2; AAA26495." evidence="15" ref="2">
    <original>RTHPLEPLA</original>
    <variation>ARTRWSPR</variation>
    <location>
        <begin position="1108"/>
        <end position="1116"/>
    </location>
</feature>
<feature type="sequence conflict" description="In Ref. 1; CAA39583." evidence="15" ref="1">
    <location>
        <begin position="1123"/>
        <end position="1125"/>
    </location>
</feature>
<feature type="sequence conflict" description="In Ref. 2; AAA26495." evidence="15" ref="2">
    <original>L</original>
    <variation>V</variation>
    <location>
        <position position="1132"/>
    </location>
</feature>
<feature type="sequence conflict" description="In Ref. 2; AAA26495." evidence="15" ref="2">
    <original>A</original>
    <variation>R</variation>
    <location>
        <position position="1192"/>
    </location>
</feature>
<feature type="sequence conflict" description="In Ref. 2; AAA26495." evidence="15" ref="2">
    <location>
        <position position="1194"/>
    </location>
</feature>
<feature type="sequence conflict" description="In Ref. 2; AAA26495." evidence="15" ref="2">
    <original>AA</original>
    <variation>RR</variation>
    <location>
        <begin position="1277"/>
        <end position="1278"/>
    </location>
</feature>
<feature type="sequence conflict" description="In Ref. 2; AAA26495." evidence="15" ref="2">
    <original>LCDGRE</original>
    <variation>STAER</variation>
    <location>
        <begin position="1385"/>
        <end position="1390"/>
    </location>
</feature>
<feature type="sequence conflict" description="In Ref. 2; AAA26495." evidence="15" ref="2">
    <location>
        <position position="1485"/>
    </location>
</feature>
<feature type="sequence conflict" description="In Ref. 2; AAA26495." evidence="15" ref="2">
    <original>G</original>
    <variation>R</variation>
    <location>
        <position position="1518"/>
    </location>
</feature>
<feature type="sequence conflict" description="In Ref. 2; AAA26495." evidence="15" ref="2">
    <original>V</original>
    <variation>L</variation>
    <location>
        <position position="1601"/>
    </location>
</feature>
<feature type="sequence conflict" description="In Ref. 2; AAA26495." evidence="15" ref="2">
    <original>LP</original>
    <variation>FA</variation>
    <location>
        <begin position="1724"/>
        <end position="1725"/>
    </location>
</feature>
<feature type="sequence conflict" description="In Ref. 2; AAA26495." evidence="15" ref="2">
    <original>Q</original>
    <variation>L</variation>
    <location>
        <position position="1732"/>
    </location>
</feature>
<feature type="sequence conflict" description="In Ref. 2; AAA26495." evidence="15" ref="2">
    <original>GPAEG</original>
    <variation>ARRA</variation>
    <location>
        <begin position="1739"/>
        <end position="1743"/>
    </location>
</feature>
<feature type="sequence conflict" description="In Ref. 2; AAA26495." evidence="15" ref="2">
    <original>T</original>
    <variation>S</variation>
    <location>
        <position position="1762"/>
    </location>
</feature>
<feature type="sequence conflict" description="In Ref. 2; AAA26495." evidence="15" ref="2">
    <original>D</original>
    <variation>DGAD</variation>
    <location>
        <position position="2252"/>
    </location>
</feature>
<feature type="sequence conflict" description="In Ref. 2; AAA26495." evidence="15" ref="2">
    <original>QSP</original>
    <variation>AVA</variation>
    <location>
        <begin position="2275"/>
        <end position="2277"/>
    </location>
</feature>
<feature type="sequence conflict" description="In Ref. 2; AAA26495." evidence="15" ref="2">
    <original>G</original>
    <variation>GR</variation>
    <location>
        <position position="2408"/>
    </location>
</feature>
<feature type="sequence conflict" description="In Ref. 2; AAA26495." evidence="15" ref="2">
    <original>LA</original>
    <variation>S</variation>
    <location>
        <begin position="2420"/>
        <end position="2421"/>
    </location>
</feature>
<feature type="sequence conflict" description="In Ref. 2; AAA26495." evidence="15" ref="2">
    <original>NA</original>
    <variation>TH</variation>
    <location>
        <begin position="2443"/>
        <end position="2444"/>
    </location>
</feature>
<feature type="sequence conflict" description="In Ref. 2; AAA26495." evidence="15" ref="2">
    <original>A</original>
    <variation>G</variation>
    <location>
        <position position="2596"/>
    </location>
</feature>
<feature type="sequence conflict" description="In Ref. 2; AAA26495." evidence="15" ref="2">
    <original>P</original>
    <variation>A</variation>
    <location>
        <position position="2609"/>
    </location>
</feature>
<feature type="sequence conflict" description="In Ref. 1; CAA39583." evidence="15" ref="1">
    <original>RRAEGRAA</original>
    <variation>AVRKAVRR</variation>
    <location>
        <begin position="2715"/>
        <end position="2722"/>
    </location>
</feature>
<feature type="sequence conflict" description="In Ref. 2; AAA26495." evidence="15" ref="2">
    <original>D</original>
    <variation>E</variation>
    <location>
        <position position="2754"/>
    </location>
</feature>
<feature type="helix" evidence="25">
    <location>
        <begin position="10"/>
        <end position="38"/>
    </location>
</feature>
<feature type="strand" evidence="25">
    <location>
        <begin position="41"/>
        <end position="50"/>
    </location>
</feature>
<feature type="turn" evidence="25">
    <location>
        <begin position="51"/>
        <end position="53"/>
    </location>
</feature>
<feature type="helix" evidence="25">
    <location>
        <begin position="57"/>
        <end position="65"/>
    </location>
</feature>
<feature type="helix" evidence="25">
    <location>
        <begin position="76"/>
        <end position="78"/>
    </location>
</feature>
<feature type="strand" evidence="25">
    <location>
        <begin position="88"/>
        <end position="90"/>
    </location>
</feature>
<feature type="turn" evidence="25">
    <location>
        <begin position="93"/>
        <end position="96"/>
    </location>
</feature>
<feature type="helix" evidence="25">
    <location>
        <begin position="101"/>
        <end position="103"/>
    </location>
</feature>
<feature type="helix" evidence="25">
    <location>
        <begin position="107"/>
        <end position="112"/>
    </location>
</feature>
<feature type="helix" evidence="25">
    <location>
        <begin position="115"/>
        <end position="130"/>
    </location>
</feature>
<feature type="helix" evidence="25">
    <location>
        <begin position="135"/>
        <end position="138"/>
    </location>
</feature>
<feature type="strand" evidence="25">
    <location>
        <begin position="143"/>
        <end position="149"/>
    </location>
</feature>
<feature type="helix" evidence="25">
    <location>
        <begin position="163"/>
        <end position="168"/>
    </location>
</feature>
<feature type="helix" evidence="25">
    <location>
        <begin position="169"/>
        <end position="173"/>
    </location>
</feature>
<feature type="helix" evidence="25">
    <location>
        <begin position="175"/>
        <end position="186"/>
    </location>
</feature>
<feature type="strand" evidence="25">
    <location>
        <begin position="192"/>
        <end position="196"/>
    </location>
</feature>
<feature type="helix" evidence="25">
    <location>
        <begin position="198"/>
        <end position="200"/>
    </location>
</feature>
<feature type="helix" evidence="25">
    <location>
        <begin position="201"/>
        <end position="214"/>
    </location>
</feature>
<feature type="strand" evidence="25">
    <location>
        <begin position="219"/>
        <end position="227"/>
    </location>
</feature>
<feature type="helix" evidence="25">
    <location>
        <begin position="233"/>
        <end position="238"/>
    </location>
</feature>
<feature type="strand" evidence="25">
    <location>
        <begin position="265"/>
        <end position="273"/>
    </location>
</feature>
<feature type="helix" evidence="25">
    <location>
        <begin position="274"/>
        <end position="279"/>
    </location>
</feature>
<feature type="strand" evidence="25">
    <location>
        <begin position="286"/>
        <end position="295"/>
    </location>
</feature>
<feature type="strand" evidence="25">
    <location>
        <begin position="300"/>
        <end position="303"/>
    </location>
</feature>
<feature type="helix" evidence="25">
    <location>
        <begin position="307"/>
        <end position="321"/>
    </location>
</feature>
<feature type="helix" evidence="25">
    <location>
        <begin position="325"/>
        <end position="327"/>
    </location>
</feature>
<feature type="strand" evidence="25">
    <location>
        <begin position="330"/>
        <end position="332"/>
    </location>
</feature>
<feature type="helix" evidence="25">
    <location>
        <begin position="341"/>
        <end position="350"/>
    </location>
</feature>
<feature type="turn" evidence="25">
    <location>
        <begin position="351"/>
        <end position="355"/>
    </location>
</feature>
<feature type="strand" evidence="25">
    <location>
        <begin position="364"/>
        <end position="366"/>
    </location>
</feature>
<feature type="helix" evidence="25">
    <location>
        <begin position="369"/>
        <end position="372"/>
    </location>
</feature>
<feature type="helix" evidence="25">
    <location>
        <begin position="376"/>
        <end position="378"/>
    </location>
</feature>
<feature type="helix" evidence="25">
    <location>
        <begin position="381"/>
        <end position="393"/>
    </location>
</feature>
<feature type="strand" evidence="25">
    <location>
        <begin position="433"/>
        <end position="439"/>
    </location>
</feature>
<feature type="strand" evidence="25">
    <location>
        <begin position="443"/>
        <end position="452"/>
    </location>
</feature>
<feature type="strand" evidence="25">
    <location>
        <begin position="468"/>
        <end position="476"/>
    </location>
</feature>
<feature type="helix" evidence="25">
    <location>
        <begin position="477"/>
        <end position="493"/>
    </location>
</feature>
<feature type="helix" evidence="25">
    <location>
        <begin position="499"/>
        <end position="508"/>
    </location>
</feature>
<feature type="strand" evidence="25">
    <location>
        <begin position="514"/>
        <end position="522"/>
    </location>
</feature>
<feature type="helix" evidence="25">
    <location>
        <begin position="523"/>
        <end position="534"/>
    </location>
</feature>
<feature type="strand" evidence="25">
    <location>
        <begin position="542"/>
        <end position="546"/>
    </location>
</feature>
<feature type="strand" evidence="25">
    <location>
        <begin position="554"/>
        <end position="558"/>
    </location>
</feature>
<feature type="helix" evidence="25">
    <location>
        <begin position="570"/>
        <end position="575"/>
    </location>
</feature>
<feature type="helix" evidence="25">
    <location>
        <begin position="577"/>
        <end position="590"/>
    </location>
</feature>
<feature type="helix" evidence="25">
    <location>
        <begin position="591"/>
        <end position="593"/>
    </location>
</feature>
<feature type="helix" evidence="25">
    <location>
        <begin position="598"/>
        <end position="603"/>
    </location>
</feature>
<feature type="helix" evidence="25">
    <location>
        <begin position="611"/>
        <end position="631"/>
    </location>
</feature>
<feature type="strand" evidence="25">
    <location>
        <begin position="637"/>
        <end position="641"/>
    </location>
</feature>
<feature type="helix" evidence="25">
    <location>
        <begin position="645"/>
        <end position="652"/>
    </location>
</feature>
<feature type="helix" evidence="25">
    <location>
        <begin position="658"/>
        <end position="671"/>
    </location>
</feature>
<feature type="helix" evidence="25">
    <location>
        <begin position="672"/>
        <end position="675"/>
    </location>
</feature>
<feature type="strand" evidence="25">
    <location>
        <begin position="680"/>
        <end position="686"/>
    </location>
</feature>
<feature type="helix" evidence="25">
    <location>
        <begin position="688"/>
        <end position="695"/>
    </location>
</feature>
<feature type="helix" evidence="25">
    <location>
        <begin position="696"/>
        <end position="698"/>
    </location>
</feature>
<feature type="strand" evidence="25">
    <location>
        <begin position="701"/>
        <end position="709"/>
    </location>
</feature>
<feature type="strand" evidence="25">
    <location>
        <begin position="712"/>
        <end position="715"/>
    </location>
</feature>
<feature type="helix" evidence="25">
    <location>
        <begin position="722"/>
        <end position="733"/>
    </location>
</feature>
<feature type="strand" evidence="25">
    <location>
        <begin position="737"/>
        <end position="741"/>
    </location>
</feature>
<feature type="helix" evidence="25">
    <location>
        <begin position="749"/>
        <end position="754"/>
    </location>
</feature>
<feature type="helix" evidence="25">
    <location>
        <begin position="755"/>
        <end position="761"/>
    </location>
</feature>
<feature type="strand" evidence="25">
    <location>
        <begin position="771"/>
        <end position="774"/>
    </location>
</feature>
<feature type="turn" evidence="25">
    <location>
        <begin position="777"/>
        <end position="779"/>
    </location>
</feature>
<feature type="helix" evidence="25">
    <location>
        <begin position="785"/>
        <end position="787"/>
    </location>
</feature>
<feature type="helix" evidence="25">
    <location>
        <begin position="790"/>
        <end position="798"/>
    </location>
</feature>
<feature type="helix" evidence="25">
    <location>
        <begin position="803"/>
        <end position="812"/>
    </location>
</feature>
<feature type="strand" evidence="25">
    <location>
        <begin position="817"/>
        <end position="820"/>
    </location>
</feature>
<feature type="strand" evidence="25">
    <location>
        <begin position="822"/>
        <end position="824"/>
    </location>
</feature>
<feature type="helix" evidence="25">
    <location>
        <begin position="828"/>
        <end position="838"/>
    </location>
</feature>
<feature type="strand" evidence="25">
    <location>
        <begin position="846"/>
        <end position="848"/>
    </location>
</feature>
<feature type="helix" evidence="25">
    <location>
        <begin position="858"/>
        <end position="869"/>
    </location>
</feature>
<feature type="turn" evidence="25">
    <location>
        <begin position="870"/>
        <end position="872"/>
    </location>
</feature>
<feature type="helix" evidence="25">
    <location>
        <begin position="878"/>
        <end position="880"/>
    </location>
</feature>
<feature type="strand" evidence="27">
    <location>
        <begin position="1492"/>
        <end position="1501"/>
    </location>
</feature>
<feature type="turn" evidence="27">
    <location>
        <begin position="1502"/>
        <end position="1504"/>
    </location>
</feature>
<feature type="helix" evidence="27">
    <location>
        <begin position="1508"/>
        <end position="1516"/>
    </location>
</feature>
<feature type="turn" evidence="27">
    <location>
        <begin position="1533"/>
        <end position="1535"/>
    </location>
</feature>
<feature type="strand" evidence="27">
    <location>
        <begin position="1551"/>
        <end position="1553"/>
    </location>
</feature>
<feature type="turn" evidence="27">
    <location>
        <begin position="1556"/>
        <end position="1559"/>
    </location>
</feature>
<feature type="turn" evidence="27">
    <location>
        <begin position="1563"/>
        <end position="1567"/>
    </location>
</feature>
<feature type="helix" evidence="27">
    <location>
        <begin position="1570"/>
        <end position="1574"/>
    </location>
</feature>
<feature type="helix" evidence="27">
    <location>
        <begin position="1578"/>
        <end position="1594"/>
    </location>
</feature>
<feature type="helix" evidence="27">
    <location>
        <begin position="1598"/>
        <end position="1601"/>
    </location>
</feature>
<feature type="strand" evidence="27">
    <location>
        <begin position="1606"/>
        <end position="1611"/>
    </location>
</feature>
<feature type="helix" evidence="27">
    <location>
        <begin position="1641"/>
        <end position="1648"/>
    </location>
</feature>
<feature type="strand" evidence="27">
    <location>
        <begin position="1654"/>
        <end position="1658"/>
    </location>
</feature>
<feature type="helix" evidence="27">
    <location>
        <begin position="1664"/>
        <end position="1676"/>
    </location>
</feature>
<feature type="strand" evidence="27">
    <location>
        <begin position="1681"/>
        <end position="1689"/>
    </location>
</feature>
<feature type="strand" evidence="27">
    <location>
        <begin position="1692"/>
        <end position="1694"/>
    </location>
</feature>
<feature type="helix" evidence="27">
    <location>
        <begin position="1695"/>
        <end position="1702"/>
    </location>
</feature>
<feature type="strand" evidence="27">
    <location>
        <begin position="1727"/>
        <end position="1735"/>
    </location>
</feature>
<feature type="helix" evidence="27">
    <location>
        <begin position="1736"/>
        <end position="1739"/>
    </location>
</feature>
<feature type="turn" evidence="27">
    <location>
        <begin position="1742"/>
        <end position="1744"/>
    </location>
</feature>
<feature type="strand" evidence="27">
    <location>
        <begin position="1749"/>
        <end position="1757"/>
    </location>
</feature>
<feature type="helix" evidence="27">
    <location>
        <begin position="1770"/>
        <end position="1784"/>
    </location>
</feature>
<feature type="strand" evidence="27">
    <location>
        <begin position="1793"/>
        <end position="1795"/>
    </location>
</feature>
<feature type="helix" evidence="27">
    <location>
        <begin position="1804"/>
        <end position="1815"/>
    </location>
</feature>
<feature type="strand" evidence="27">
    <location>
        <begin position="1826"/>
        <end position="1829"/>
    </location>
</feature>
<feature type="helix" evidence="27">
    <location>
        <begin position="1832"/>
        <end position="1835"/>
    </location>
</feature>
<feature type="helix" evidence="27">
    <location>
        <begin position="1839"/>
        <end position="1841"/>
    </location>
</feature>
<feature type="helix" evidence="27">
    <location>
        <begin position="1842"/>
        <end position="1856"/>
    </location>
</feature>
<feature type="strand" evidence="27">
    <location>
        <begin position="1866"/>
        <end position="1868"/>
    </location>
</feature>
<feature type="strand" evidence="27">
    <location>
        <begin position="1870"/>
        <end position="1872"/>
    </location>
</feature>
<feature type="helix" evidence="27">
    <location>
        <begin position="1874"/>
        <end position="1876"/>
    </location>
</feature>
<feature type="strand" evidence="27">
    <location>
        <begin position="1877"/>
        <end position="1881"/>
    </location>
</feature>
<feature type="strand" evidence="27">
    <location>
        <begin position="1897"/>
        <end position="1903"/>
    </location>
</feature>
<feature type="strand" evidence="27">
    <location>
        <begin position="1905"/>
        <end position="1907"/>
    </location>
</feature>
<feature type="strand" evidence="27">
    <location>
        <begin position="1909"/>
        <end position="1915"/>
    </location>
</feature>
<feature type="strand" evidence="27">
    <location>
        <begin position="1934"/>
        <end position="1936"/>
    </location>
</feature>
<feature type="strand" evidence="27">
    <location>
        <begin position="1938"/>
        <end position="1946"/>
    </location>
</feature>
<feature type="helix" evidence="27">
    <location>
        <begin position="1947"/>
        <end position="1960"/>
    </location>
</feature>
<feature type="strand" evidence="27">
    <location>
        <begin position="1963"/>
        <end position="1965"/>
    </location>
</feature>
<feature type="helix" evidence="27">
    <location>
        <begin position="1967"/>
        <end position="1976"/>
    </location>
</feature>
<feature type="strand" evidence="27">
    <location>
        <begin position="1982"/>
        <end position="1991"/>
    </location>
</feature>
<feature type="helix" evidence="27">
    <location>
        <begin position="1992"/>
        <end position="2003"/>
    </location>
</feature>
<feature type="strand" evidence="27">
    <location>
        <begin position="2011"/>
        <end position="2013"/>
    </location>
</feature>
<feature type="strand" evidence="27">
    <location>
        <begin position="2022"/>
        <end position="2025"/>
    </location>
</feature>
<feature type="turn" evidence="27">
    <location>
        <begin position="2033"/>
        <end position="2036"/>
    </location>
</feature>
<feature type="helix" evidence="27">
    <location>
        <begin position="2038"/>
        <end position="2041"/>
    </location>
</feature>
<feature type="helix" evidence="27">
    <location>
        <begin position="2043"/>
        <end position="2060"/>
    </location>
</feature>
<feature type="helix" evidence="27">
    <location>
        <begin position="2064"/>
        <end position="2069"/>
    </location>
</feature>
<feature type="helix" evidence="27">
    <location>
        <begin position="2080"/>
        <end position="2100"/>
    </location>
</feature>
<feature type="strand" evidence="27">
    <location>
        <begin position="2106"/>
        <end position="2110"/>
    </location>
</feature>
<feature type="helix" evidence="27">
    <location>
        <begin position="2114"/>
        <end position="2121"/>
    </location>
</feature>
<feature type="helix" evidence="27">
    <location>
        <begin position="2127"/>
        <end position="2140"/>
    </location>
</feature>
<feature type="helix" evidence="27">
    <location>
        <begin position="2141"/>
        <end position="2144"/>
    </location>
</feature>
<feature type="turn" evidence="27">
    <location>
        <begin position="2145"/>
        <end position="2147"/>
    </location>
</feature>
<feature type="strand" evidence="27">
    <location>
        <begin position="2149"/>
        <end position="2155"/>
    </location>
</feature>
<feature type="helix" evidence="27">
    <location>
        <begin position="2157"/>
        <end position="2163"/>
    </location>
</feature>
<feature type="helix" evidence="27">
    <location>
        <begin position="2165"/>
        <end position="2167"/>
    </location>
</feature>
<feature type="turn" evidence="27">
    <location>
        <begin position="2168"/>
        <end position="2170"/>
    </location>
</feature>
<feature type="strand" evidence="27">
    <location>
        <begin position="2171"/>
        <end position="2178"/>
    </location>
</feature>
<feature type="strand" evidence="27">
    <location>
        <begin position="2181"/>
        <end position="2186"/>
    </location>
</feature>
<feature type="helix" evidence="27">
    <location>
        <begin position="2188"/>
        <end position="2201"/>
    </location>
</feature>
<feature type="strand" evidence="27">
    <location>
        <begin position="2205"/>
        <end position="2207"/>
    </location>
</feature>
<feature type="helix" evidence="27">
    <location>
        <begin position="2217"/>
        <end position="2222"/>
    </location>
</feature>
<feature type="helix" evidence="27">
    <location>
        <begin position="2223"/>
        <end position="2229"/>
    </location>
</feature>
<feature type="strand" evidence="27">
    <location>
        <begin position="2242"/>
        <end position="2244"/>
    </location>
</feature>
<feature type="turn" evidence="27">
    <location>
        <begin position="2245"/>
        <end position="2248"/>
    </location>
</feature>
<feature type="helix" evidence="27">
    <location>
        <begin position="2255"/>
        <end position="2263"/>
    </location>
</feature>
<feature type="helix" evidence="27">
    <location>
        <begin position="2268"/>
        <end position="2277"/>
    </location>
</feature>
<feature type="strand" evidence="27">
    <location>
        <begin position="2282"/>
        <end position="2285"/>
    </location>
</feature>
<feature type="helix" evidence="27">
    <location>
        <begin position="2293"/>
        <end position="2299"/>
    </location>
</feature>
<feature type="strand" evidence="27">
    <location>
        <begin position="2304"/>
        <end position="2307"/>
    </location>
</feature>
<feature type="strand" evidence="27">
    <location>
        <begin position="2311"/>
        <end position="2313"/>
    </location>
</feature>
<feature type="helix" evidence="27">
    <location>
        <begin position="2314"/>
        <end position="2327"/>
    </location>
</feature>
<feature type="helix" evidence="27">
    <location>
        <begin position="2334"/>
        <end position="2337"/>
    </location>
</feature>
<feature type="helix" evidence="26">
    <location>
        <begin position="2906"/>
        <end position="2916"/>
    </location>
</feature>
<feature type="helix" evidence="26">
    <location>
        <begin position="2920"/>
        <end position="2931"/>
    </location>
</feature>
<feature type="strand" evidence="26">
    <location>
        <begin position="2939"/>
        <end position="2942"/>
    </location>
</feature>
<feature type="strand" evidence="26">
    <location>
        <begin position="2948"/>
        <end position="2951"/>
    </location>
</feature>
<feature type="strand" evidence="26">
    <location>
        <begin position="2954"/>
        <end position="2956"/>
    </location>
</feature>
<feature type="strand" evidence="26">
    <location>
        <begin position="2958"/>
        <end position="2962"/>
    </location>
</feature>
<feature type="strand" evidence="24">
    <location>
        <begin position="2966"/>
        <end position="2968"/>
    </location>
</feature>
<feature type="helix" evidence="26">
    <location>
        <begin position="2971"/>
        <end position="2974"/>
    </location>
</feature>
<feature type="helix" evidence="26">
    <location>
        <begin position="2975"/>
        <end position="2981"/>
    </location>
</feature>
<feature type="turn" evidence="26">
    <location>
        <begin position="2982"/>
        <end position="2984"/>
    </location>
</feature>
<feature type="strand" evidence="26">
    <location>
        <begin position="2987"/>
        <end position="2990"/>
    </location>
</feature>
<feature type="strand" evidence="26">
    <location>
        <begin position="3001"/>
        <end position="3004"/>
    </location>
</feature>
<feature type="helix" evidence="26">
    <location>
        <begin position="3005"/>
        <end position="3020"/>
    </location>
</feature>
<feature type="strand" evidence="24">
    <location>
        <begin position="3021"/>
        <end position="3023"/>
    </location>
</feature>
<feature type="strand" evidence="26">
    <location>
        <begin position="3025"/>
        <end position="3030"/>
    </location>
</feature>
<feature type="helix" evidence="26">
    <location>
        <begin position="3032"/>
        <end position="3046"/>
    </location>
</feature>
<feature type="strand" evidence="26">
    <location>
        <begin position="3052"/>
        <end position="3058"/>
    </location>
</feature>
<feature type="turn" evidence="23">
    <location>
        <begin position="3062"/>
        <end position="3064"/>
    </location>
</feature>
<feature type="helix" evidence="26">
    <location>
        <begin position="3066"/>
        <end position="3070"/>
    </location>
</feature>
<feature type="helix" evidence="26">
    <location>
        <begin position="3072"/>
        <end position="3081"/>
    </location>
</feature>
<feature type="helix" evidence="26">
    <location>
        <begin position="3089"/>
        <end position="3104"/>
    </location>
</feature>
<feature type="strand" evidence="26">
    <location>
        <begin position="3114"/>
        <end position="3121"/>
    </location>
</feature>
<feature type="strand" evidence="26">
    <location>
        <begin position="3127"/>
        <end position="3129"/>
    </location>
</feature>
<feature type="strand" evidence="26">
    <location>
        <begin position="3136"/>
        <end position="3138"/>
    </location>
</feature>
<feature type="strand" evidence="26">
    <location>
        <begin position="3140"/>
        <end position="3146"/>
    </location>
</feature>
<feature type="helix" evidence="26">
    <location>
        <begin position="3150"/>
        <end position="3152"/>
    </location>
</feature>
<feature type="turn" evidence="26">
    <location>
        <begin position="3153"/>
        <end position="3155"/>
    </location>
</feature>
<feature type="helix" evidence="26">
    <location>
        <begin position="3156"/>
        <end position="3167"/>
    </location>
</feature>
<accession>Q03133</accession>
<accession>Q54097</accession>
<accession>Q99270</accession>
<comment type="function">
    <text evidence="12 18">Involved in the biosynthesis of antibiotic erythromycin via the biosynthesis of its aglycone precursor, 6-deoxyerythronolide B (6-dEB).</text>
</comment>
<comment type="catalytic activity">
    <reaction evidence="12">
        <text>6 (S)-methylmalonyl-CoA + propanoyl-CoA + 6 NADPH + 12 H(+) = 6-deoxyerythronolide B + 6 CO2 + 6 NADP(+) + 7 CoA + H2O</text>
        <dbReference type="Rhea" id="RHEA:23068"/>
        <dbReference type="ChEBI" id="CHEBI:15377"/>
        <dbReference type="ChEBI" id="CHEBI:15378"/>
        <dbReference type="ChEBI" id="CHEBI:16089"/>
        <dbReference type="ChEBI" id="CHEBI:16526"/>
        <dbReference type="ChEBI" id="CHEBI:57287"/>
        <dbReference type="ChEBI" id="CHEBI:57327"/>
        <dbReference type="ChEBI" id="CHEBI:57392"/>
        <dbReference type="ChEBI" id="CHEBI:57783"/>
        <dbReference type="ChEBI" id="CHEBI:58349"/>
        <dbReference type="EC" id="2.3.1.94"/>
    </reaction>
</comment>
<comment type="cofactor">
    <cofactor evidence="17">
        <name>pantetheine 4'-phosphate</name>
        <dbReference type="ChEBI" id="CHEBI:47942"/>
    </cofactor>
    <text evidence="15">Binds 2 phosphopantetheines covalently.</text>
</comment>
<comment type="activity regulation">
    <text evidence="13">Inhibited by diphenyl phosphonates derivatives such as diphenyl allylphosphonate.</text>
</comment>
<comment type="pathway">
    <text evidence="18 21">Antibiotic biosynthesis; erythromycin biosynthesis.</text>
</comment>
<comment type="subunit">
    <text evidence="8 9 11 18 19 20">Homodimer (PubMed:11752428, PubMed:12379102, PubMed:16844787). Erythronolide synthase is composed of EryAI, EryAII and EryAIII multimodular (2 modules) polypeptides each coding for a functional synthase subunit which participates in 2 of the six FAS-like elongation steps required for formation of the polyketide. Module 1, 2, 3, 4, 5, and 6 participating in biosynthesis steps 1, 2, 3, 4, 5, and 6, respectively.</text>
</comment>
<comment type="miscellaneous">
    <text evidence="18 21">Type I modular polyketide synthases (PKSs) catalyze the step-wise condensation of simple carboxylic acid derivatives. Organizationally, type I PKSs are arranged into modules, wherein each module is comprised of a set of catalytic activities that is responsible for a single elongation of the polyketide chain and the appropriate reductive processing of the beta-keto functionality. A minimal elongation module contains an acyl transferase (AT) domain, an acyl-carrier protein (ACP) domain, and a ketosynthase (KS) domain. The AT domain is responsible for loading the methylmalonyl-CoA extender unit onto the phosphopantetheinylated ACP domain. Subsequently, the KS domain decarboxylates and then condenses the ACP-bound extender unit with the growing polyketide chain obtained from the preceding module to yield an ACP-bound beta-ketoacyl intermediate. In addition to the three core domains, each elongation module may contain up to three additional domains: a ketoreductase (KR), dehydratase (DH), and an enoyl reductase (ER) that are responsible for the reductive processing of the beta-keto functionality prior to the next extension step. The presence of a KR domain alone gives rise to a beta-hydroxyl functionality, the presence of both a KR and a DH domain generates an alkene, while the combination of KR, DH, and ER results in complete reduction to the alkane. Finally, a thioesterase (TE) domain, typically found at the terminus of the last elongation module, catalyzes the termination of polyketide biosynthesis. The activity of this domain results in cleavage of the acyl chain from the adjacent ACP and formation of the macrocyclic ring.</text>
</comment>
<keyword id="KW-0002">3D-structure</keyword>
<keyword id="KW-0012">Acyltransferase</keyword>
<keyword id="KW-0045">Antibiotic biosynthesis</keyword>
<keyword id="KW-0903">Direct protein sequencing</keyword>
<keyword id="KW-0511">Multifunctional enzyme</keyword>
<keyword id="KW-0521">NADP</keyword>
<keyword id="KW-0596">Phosphopantetheine</keyword>
<keyword id="KW-0597">Phosphoprotein</keyword>
<keyword id="KW-0677">Repeat</keyword>
<keyword id="KW-0808">Transferase</keyword>
<sequence length="3172" mass="331479">MSGDNGMTEEKLRRYLKRTVTELDSVTARLREVEHRAGEPIAIVGMACRFPGDVDSPESFWEFVSGGGDAIAEAPADRGWEPDPDARLGGMLAAAGDFDAGFFGISPREALAMDPQQRIMLEISWEALERAGHDPVSLRGSATGVFTGVGTVDYGPRPDEAPDEVLGYVGTGTASSVASGRVAYCLGLEGPAMTVDTACSSGLTALHLAMESLRRDECGLALAGGVTVMSSPGAFTEFRSQGGLAADGRCKPFSKAADGFGLAEGAGVLVLQRLSAARREGRPVLAVLAGSAVNQDGASNGLTAPSGPAQQRVIRRALENAGVRAGDVDYVEAHGTGTRLGDPIEVHALLSTYGAERDPDDPLWIGSVKSNIGHTQAAAGVAGVMKAVLALRHGEMPRTLHFDEPSPQIEWDLGAVSVVSQARSWPAGERPRRAGVSSFGISGTNAHVIVEEAPEADEPEPAPDSGPVPLVLSGRDEQAMRAQAGRLADHLAPEPRNSLRDTGFTLATRASAMEHRAVVVGDRDEALAGLRAVADRRIADRTATGQGPNSPRRVAMVFPGQGAQWQGMARDLLRESQVFADSIRDCERALAPHVDWSLTDLLSGARPLDRVDVVQPALFAVMVSLAALWRSHGVEPAAVVGHSQGEIAAAHVAGALTLEDAAKLVAVRSRVLRRLGGQGGMASFGLGTEQAAERIGRFAGALSIASVNGPRSVVVVAGESGPLDELIAECEAEAHKARRIPVDYASHSPQVESLREELLTELAGISPVSADVALYSTTTGQPIDTATMDTAYWYANLREQVRFQDATRQLAEAGFDAFVEVSPHPVLTVGIEATLDSALPADAGACVVGTLRRDRGGLADFHTALGEAYAQGVEVDWSPAFADARPVELPVYPFQRYWLPIPTGGRARDEDDDWRYQVVWREAEWESASLAGRVLLVTGPGVPSELSDAIRSGLEQSGATVLTCDVESRSTIGTALEAADTDALSTVGVAAVPHGEAVDPSLDALALVQALGAAGVEAPLWVLTRNAVQVADGELVDPAQAMVGGLGRVVGIEQPGRWGGLVDLVDADAASIRSLAAVLADPRGEEQVAIRADGIKVARLVPAPARARTHPLEPLAGTVLVTGGTGGIGAHLARWLARSGAEHLVLLGRRGADAPGASELREELTALGTGVTIAACDVADRARLEAVLAAEAAAEGRTVSAVMHAAGVSTSTPLDDLTEAEFTEIADVKVRGTVNLDELCPDLDAFVLFSSNAGVWGSPGLASYAAANAFLDGFARAARSEGAPVTSIAWGLWAGQNMAGDEGGEYLRSQGLRAMDPDRAVEELHITLDHGQTSVSVVDMDRRRFVELFTAARHRPLFDEIAGARAEARQSEEGPALAQRLAALLCDGREREHLAHLIRAEVAAVLGHGDDAAIDRDRAFRDLGFDSMTAVDLRNRLAAVTGVREAATVVFDHPTITRLADHYLERLVGAAEAEQAPALVREVPPKDADDPIAIVGMACRFPGGVHNPGELWEFIVGGGDAVTEMPTDRGWDLDALFDPDPQRHGTSYSRHGAFLDGAADFDAAFFGISPREALAMDPQQRQVLETTWELFENAGIDPHSVRGSDTGVFLGAAYQGYGQDAVVPEDSEGYLLTGNSSAVVSGRVAYVLGLEGPAVTVDTACSSSLVALHSACGSLRDGDCGLAVAGGVSVMAGPEVFTEFSRQGGLAVDGRCKAFSAEADGFGLPEGVAVVQLQRLSDGPAEGGRQVLGVVAGSAINQDGATNGLAAPSGVAQQRVIRKAWARAGITGADVAVVEAHGTGTRLGDPVEASALLATYGKSRGSSGPVLLGSVKSNIGHAQAAAGVAGVIKVVLGLNRGLVPPMLCRGERSPLIEWSSGGVELAEAVSPWPPAADGVRRAGVSAFGVSGTNAHVIIAEPPEPEPLPEPGPVGVLAAANSVPVLLSARTETALAAQARLLESAVDDSVPLTALASALATGRAHLPRRAALLAGDHEQLRGQLRAVAEGVAAPGATTGTASAGGVVFVFPGQGAQWEGMARGLLSVPVFAESIAECDAVLSEVAGFSASEVLEQRPDAPSLERVDVVQPVLFSVMVSLARLWGACGVSPSAVIGHSQGEIAAAVVAGVLSLEDGVRVVALRAKALRALAGKGGMVSLAAPGERARALIAPWEDRISVAAVNSPSSVVVSGDPEALAELVARCEDEGVRAKTLPVDYASHSRHVEEIRETILADLDGISARRAAIPLYSTLHGERRDMGPRYWYDNLRSQVRFDEAVSAQSPDGHATFVEMSPHPVLTAAVQEIAADAVAIGSLHRDTAEEHLIAELARAHVHGVAVDWRNVFPAAPPVALPNYPFEPQRYWLAPEVSDQLADSRYRVDWRPLATTPVDLEGGFLVHGSAPESLTSAVEKAGGVVPVASADREALAAALREVPGEVAGVLSVHTGAANALALHQSLGEAGVRAPLWLVTSRAVALGESEPVDPEQAMVWGLGRVMGLETPERWGGLVDLPAEPAPGDGEAFVACLGADGHEDQVAIRDHARYGRRLVRAPLGTRESSWEPAGTALVTGGTGALGGHVARHLARCGVEDLVLVSRRGVDAPAAAELEAELVALGPKTTITACDVADREQLSKLLEELRGQGRPVRTVVHTAGVPESRPLHEIGELESVCAAKVTGARLLDELCPDAETFVLFSSGAGVWGSANLGAYSAANAYLDALAHRRRAEGRAATSVAWGAWAGEGMATGDLEGLTRRGLRPMAPDRAIRALHQALDNGDTCVSIADVDWEAFAVGFTAARPRPLLDELVTPAVGAVPAVQAAPAREMTSQELLEFTHSHVAAILGHSSPDAVGQDQPFTELGFDSLTAVGLRNQLQQATGLALPATLVFEHPTVRRLADHIGQQLDSGTPAREASSALRDGYRQAGVSGRVRSYLDLLAGLSDFREHFDGSDGFSLDLVDMADGPGEVTVICCAGTAAISGPHEFTRLAGALRGIAPVRAVPQPGYEEGEPLPSSMAAVAAVQADAVIRTQGDKPFVVAGHSAGALMAYALATELLDRGHPPRGVVLIDVYPPGHQDAMNAWLEELTATLFDRETVRMDDTRLTALGAYDRLTGQWRPRETGLPTLLVSAGEPMGPWPDDSWKPTWPFEHDTVAVPGDHFTMVQEHADAIARHIDAWLGGGNS</sequence>
<evidence type="ECO:0000250" key="1">
    <source>
        <dbReference type="UniProtKB" id="Q03131"/>
    </source>
</evidence>
<evidence type="ECO:0000250" key="2">
    <source>
        <dbReference type="UniProtKB" id="Q03132"/>
    </source>
</evidence>
<evidence type="ECO:0000250" key="3">
    <source>
        <dbReference type="UniProtKB" id="Q9ZGI2"/>
    </source>
</evidence>
<evidence type="ECO:0000250" key="4">
    <source>
        <dbReference type="UniProtKB" id="Q9ZGI4"/>
    </source>
</evidence>
<evidence type="ECO:0000255" key="5">
    <source>
        <dbReference type="PROSITE-ProRule" id="PRU00258"/>
    </source>
</evidence>
<evidence type="ECO:0000255" key="6">
    <source>
        <dbReference type="PROSITE-ProRule" id="PRU01348"/>
    </source>
</evidence>
<evidence type="ECO:0000255" key="7">
    <source>
        <dbReference type="PROSITE-ProRule" id="PRU10022"/>
    </source>
</evidence>
<evidence type="ECO:0000269" key="8">
    <source>
    </source>
</evidence>
<evidence type="ECO:0000269" key="9">
    <source>
    </source>
</evidence>
<evidence type="ECO:0000269" key="10">
    <source>
    </source>
</evidence>
<evidence type="ECO:0000269" key="11">
    <source>
    </source>
</evidence>
<evidence type="ECO:0000269" key="12">
    <source>
    </source>
</evidence>
<evidence type="ECO:0000269" key="13">
    <source>
    </source>
</evidence>
<evidence type="ECO:0000303" key="14">
    <source>
    </source>
</evidence>
<evidence type="ECO:0000305" key="15"/>
<evidence type="ECO:0000305" key="16">
    <source>
    </source>
</evidence>
<evidence type="ECO:0000305" key="17">
    <source>
    </source>
</evidence>
<evidence type="ECO:0000305" key="18">
    <source>
    </source>
</evidence>
<evidence type="ECO:0000305" key="19">
    <source>
    </source>
</evidence>
<evidence type="ECO:0000305" key="20">
    <source>
    </source>
</evidence>
<evidence type="ECO:0000305" key="21">
    <source>
    </source>
</evidence>
<evidence type="ECO:0000305" key="22">
    <source>
    </source>
</evidence>
<evidence type="ECO:0007829" key="23">
    <source>
        <dbReference type="PDB" id="1KEZ"/>
    </source>
</evidence>
<evidence type="ECO:0007829" key="24">
    <source>
        <dbReference type="PDB" id="1MO2"/>
    </source>
</evidence>
<evidence type="ECO:0007829" key="25">
    <source>
        <dbReference type="PDB" id="2HG4"/>
    </source>
</evidence>
<evidence type="ECO:0007829" key="26">
    <source>
        <dbReference type="PDB" id="5D3K"/>
    </source>
</evidence>
<evidence type="ECO:0007829" key="27">
    <source>
        <dbReference type="PDB" id="8G4U"/>
    </source>
</evidence>
<gene>
    <name evidence="14" type="primary">eryA</name>
</gene>
<proteinExistence type="evidence at protein level"/>
<dbReference type="EC" id="2.3.1.94" evidence="12"/>
<dbReference type="EMBL" id="X56107">
    <property type="protein sequence ID" value="CAA39583.1"/>
    <property type="molecule type" value="Genomic_DNA"/>
</dbReference>
<dbReference type="EMBL" id="M63677">
    <property type="protein sequence ID" value="AAA26495.1"/>
    <property type="molecule type" value="Genomic_DNA"/>
</dbReference>
<dbReference type="EMBL" id="X62569">
    <property type="protein sequence ID" value="CAA44449.1"/>
    <property type="molecule type" value="Genomic_DNA"/>
</dbReference>
<dbReference type="PIR" id="S13595">
    <property type="entry name" value="S13595"/>
</dbReference>
<dbReference type="PIR" id="S22012">
    <property type="entry name" value="S22012"/>
</dbReference>
<dbReference type="PDB" id="1KEZ">
    <property type="method" value="X-ray"/>
    <property type="resolution" value="2.80 A"/>
    <property type="chains" value="A/B/C=2893-3172"/>
</dbReference>
<dbReference type="PDB" id="1MO2">
    <property type="method" value="X-ray"/>
    <property type="resolution" value="3.00 A"/>
    <property type="chains" value="A/B=2893-3172"/>
</dbReference>
<dbReference type="PDB" id="1PZR">
    <property type="method" value="NMR"/>
    <property type="chains" value="A/B=1-39"/>
</dbReference>
<dbReference type="PDB" id="2HG4">
    <property type="method" value="X-ray"/>
    <property type="resolution" value="2.73 A"/>
    <property type="chains" value="A/B/C/D/E/F=1-917"/>
</dbReference>
<dbReference type="PDB" id="5D3K">
    <property type="method" value="X-ray"/>
    <property type="resolution" value="1.70 A"/>
    <property type="chains" value="A=2904-3172"/>
</dbReference>
<dbReference type="PDB" id="5D3Z">
    <property type="method" value="X-ray"/>
    <property type="resolution" value="2.10 A"/>
    <property type="chains" value="A=2904-3172"/>
</dbReference>
<dbReference type="PDB" id="6MLK">
    <property type="method" value="X-ray"/>
    <property type="resolution" value="2.45 A"/>
    <property type="chains" value="A=2893-3172"/>
</dbReference>
<dbReference type="PDB" id="7M7E">
    <property type="method" value="EM"/>
    <property type="resolution" value="3.20 A"/>
    <property type="chains" value="A/B=2896-3172"/>
</dbReference>
<dbReference type="PDB" id="7M7F">
    <property type="method" value="EM"/>
    <property type="resolution" value="3.20 A"/>
    <property type="chains" value="A/B=2896-3172"/>
</dbReference>
<dbReference type="PDB" id="7M7G">
    <property type="method" value="EM"/>
    <property type="resolution" value="4.10 A"/>
    <property type="chains" value="A/B=2896-3172"/>
</dbReference>
<dbReference type="PDB" id="7M7H">
    <property type="method" value="EM"/>
    <property type="resolution" value="4.10 A"/>
    <property type="chains" value="A/B=2896-3172"/>
</dbReference>
<dbReference type="PDB" id="8G4U">
    <property type="method" value="X-ray"/>
    <property type="resolution" value="2.90 A"/>
    <property type="chains" value="A/B/C/D=1488-2362"/>
</dbReference>
<dbReference type="PDB" id="8TJN">
    <property type="method" value="EM"/>
    <property type="resolution" value="3.73 A"/>
    <property type="chains" value="A/B=2896-3172"/>
</dbReference>
<dbReference type="PDB" id="8TJO">
    <property type="method" value="EM"/>
    <property type="resolution" value="3.61 A"/>
    <property type="chains" value="A/B=2896-3172"/>
</dbReference>
<dbReference type="PDBsum" id="1KEZ"/>
<dbReference type="PDBsum" id="1MO2"/>
<dbReference type="PDBsum" id="1PZR"/>
<dbReference type="PDBsum" id="2HG4"/>
<dbReference type="PDBsum" id="5D3K"/>
<dbReference type="PDBsum" id="5D3Z"/>
<dbReference type="PDBsum" id="6MLK"/>
<dbReference type="PDBsum" id="7M7E"/>
<dbReference type="PDBsum" id="7M7F"/>
<dbReference type="PDBsum" id="7M7G"/>
<dbReference type="PDBsum" id="7M7H"/>
<dbReference type="PDBsum" id="8G4U"/>
<dbReference type="PDBsum" id="8TJN"/>
<dbReference type="PDBsum" id="8TJO"/>
<dbReference type="EMDB" id="EMD-23710"/>
<dbReference type="EMDB" id="EMD-23711"/>
<dbReference type="EMDB" id="EMD-23712"/>
<dbReference type="EMDB" id="EMD-23713"/>
<dbReference type="EMDB" id="EMD-41305"/>
<dbReference type="EMDB" id="EMD-41306"/>
<dbReference type="SMR" id="Q03133"/>
<dbReference type="DIP" id="DIP-61229N"/>
<dbReference type="ESTHER" id="sacer-ery3">
    <property type="family name" value="Thioesterase"/>
</dbReference>
<dbReference type="ABCD" id="Q03133">
    <property type="antibodies" value="1 sequenced antibody"/>
</dbReference>
<dbReference type="BioCyc" id="MetaCyc:MONOMER-17079"/>
<dbReference type="BRENDA" id="2.3.1.94">
    <property type="organism ID" value="5518"/>
</dbReference>
<dbReference type="UniPathway" id="UPA00240"/>
<dbReference type="EvolutionaryTrace" id="Q03133"/>
<dbReference type="GO" id="GO:0004315">
    <property type="term" value="F:3-oxoacyl-[acyl-carrier-protein] synthase activity"/>
    <property type="evidence" value="ECO:0007669"/>
    <property type="project" value="InterPro"/>
</dbReference>
<dbReference type="GO" id="GO:0047879">
    <property type="term" value="F:erythronolide synthase activity"/>
    <property type="evidence" value="ECO:0000314"/>
    <property type="project" value="UniProtKB"/>
</dbReference>
<dbReference type="GO" id="GO:0004312">
    <property type="term" value="F:fatty acid synthase activity"/>
    <property type="evidence" value="ECO:0007669"/>
    <property type="project" value="TreeGrafter"/>
</dbReference>
<dbReference type="GO" id="GO:0031177">
    <property type="term" value="F:phosphopantetheine binding"/>
    <property type="evidence" value="ECO:0000304"/>
    <property type="project" value="UniProtKB"/>
</dbReference>
<dbReference type="GO" id="GO:0006633">
    <property type="term" value="P:fatty acid biosynthetic process"/>
    <property type="evidence" value="ECO:0007669"/>
    <property type="project" value="InterPro"/>
</dbReference>
<dbReference type="GO" id="GO:0033068">
    <property type="term" value="P:macrolide biosynthetic process"/>
    <property type="evidence" value="ECO:0000314"/>
    <property type="project" value="UniProtKB"/>
</dbReference>
<dbReference type="CDD" id="cd08952">
    <property type="entry name" value="KR_1_SDR_x"/>
    <property type="match status" value="2"/>
</dbReference>
<dbReference type="CDD" id="cd00833">
    <property type="entry name" value="PKS"/>
    <property type="match status" value="2"/>
</dbReference>
<dbReference type="FunFam" id="3.40.47.10:FF:000019">
    <property type="entry name" value="Polyketide synthase type I"/>
    <property type="match status" value="2"/>
</dbReference>
<dbReference type="FunFam" id="3.40.366.10:FF:000002">
    <property type="entry name" value="Probable polyketide synthase 2"/>
    <property type="match status" value="2"/>
</dbReference>
<dbReference type="FunFam" id="1.10.1200.10:FF:000007">
    <property type="entry name" value="Probable polyketide synthase pks17"/>
    <property type="match status" value="2"/>
</dbReference>
<dbReference type="Gene3D" id="3.30.70.3290">
    <property type="match status" value="2"/>
</dbReference>
<dbReference type="Gene3D" id="3.40.47.10">
    <property type="match status" value="2"/>
</dbReference>
<dbReference type="Gene3D" id="6.10.40.10">
    <property type="match status" value="1"/>
</dbReference>
<dbReference type="Gene3D" id="1.10.1200.10">
    <property type="entry name" value="ACP-like"/>
    <property type="match status" value="2"/>
</dbReference>
<dbReference type="Gene3D" id="3.40.50.1820">
    <property type="entry name" value="alpha/beta hydrolase"/>
    <property type="match status" value="1"/>
</dbReference>
<dbReference type="Gene3D" id="3.40.366.10">
    <property type="entry name" value="Malonyl-Coenzyme A Acyl Carrier Protein, domain 2"/>
    <property type="match status" value="2"/>
</dbReference>
<dbReference type="Gene3D" id="3.40.50.720">
    <property type="entry name" value="NAD(P)-binding Rossmann-like Domain"/>
    <property type="match status" value="2"/>
</dbReference>
<dbReference type="InterPro" id="IPR029058">
    <property type="entry name" value="AB_hydrolase_fold"/>
</dbReference>
<dbReference type="InterPro" id="IPR001227">
    <property type="entry name" value="Ac_transferase_dom_sf"/>
</dbReference>
<dbReference type="InterPro" id="IPR036736">
    <property type="entry name" value="ACP-like_sf"/>
</dbReference>
<dbReference type="InterPro" id="IPR014043">
    <property type="entry name" value="Acyl_transferase_dom"/>
</dbReference>
<dbReference type="InterPro" id="IPR016035">
    <property type="entry name" value="Acyl_Trfase/lysoPLipase"/>
</dbReference>
<dbReference type="InterPro" id="IPR018201">
    <property type="entry name" value="Ketoacyl_synth_AS"/>
</dbReference>
<dbReference type="InterPro" id="IPR014031">
    <property type="entry name" value="Ketoacyl_synth_C"/>
</dbReference>
<dbReference type="InterPro" id="IPR014030">
    <property type="entry name" value="Ketoacyl_synth_N"/>
</dbReference>
<dbReference type="InterPro" id="IPR016036">
    <property type="entry name" value="Malonyl_transacylase_ACP-bd"/>
</dbReference>
<dbReference type="InterPro" id="IPR036291">
    <property type="entry name" value="NAD(P)-bd_dom_sf"/>
</dbReference>
<dbReference type="InterPro" id="IPR015083">
    <property type="entry name" value="NorB/c/GfsB-D-like_docking"/>
</dbReference>
<dbReference type="InterPro" id="IPR032821">
    <property type="entry name" value="PKS_assoc"/>
</dbReference>
<dbReference type="InterPro" id="IPR020841">
    <property type="entry name" value="PKS_Beta-ketoAc_synthase_dom"/>
</dbReference>
<dbReference type="InterPro" id="IPR013968">
    <property type="entry name" value="PKS_KR"/>
</dbReference>
<dbReference type="InterPro" id="IPR050091">
    <property type="entry name" value="PKS_NRPS_Biosynth_Enz"/>
</dbReference>
<dbReference type="InterPro" id="IPR020806">
    <property type="entry name" value="PKS_PP-bd"/>
</dbReference>
<dbReference type="InterPro" id="IPR020802">
    <property type="entry name" value="PKS_thioesterase"/>
</dbReference>
<dbReference type="InterPro" id="IPR036299">
    <property type="entry name" value="Polyketide_synth_docking_sf"/>
</dbReference>
<dbReference type="InterPro" id="IPR009081">
    <property type="entry name" value="PP-bd_ACP"/>
</dbReference>
<dbReference type="InterPro" id="IPR006162">
    <property type="entry name" value="Ppantetheine_attach_site"/>
</dbReference>
<dbReference type="InterPro" id="IPR001031">
    <property type="entry name" value="Thioesterase"/>
</dbReference>
<dbReference type="InterPro" id="IPR016039">
    <property type="entry name" value="Thiolase-like"/>
</dbReference>
<dbReference type="PANTHER" id="PTHR43775">
    <property type="entry name" value="FATTY ACID SYNTHASE"/>
    <property type="match status" value="1"/>
</dbReference>
<dbReference type="PANTHER" id="PTHR43775:SF51">
    <property type="entry name" value="INACTIVE PHENOLPHTHIOCEROL SYNTHESIS POLYKETIDE SYNTHASE TYPE I PKS1-RELATED"/>
    <property type="match status" value="1"/>
</dbReference>
<dbReference type="Pfam" id="PF00698">
    <property type="entry name" value="Acyl_transf_1"/>
    <property type="match status" value="2"/>
</dbReference>
<dbReference type="Pfam" id="PF08990">
    <property type="entry name" value="Docking"/>
    <property type="match status" value="1"/>
</dbReference>
<dbReference type="Pfam" id="PF16197">
    <property type="entry name" value="KAsynt_C_assoc"/>
    <property type="match status" value="2"/>
</dbReference>
<dbReference type="Pfam" id="PF00109">
    <property type="entry name" value="ketoacyl-synt"/>
    <property type="match status" value="2"/>
</dbReference>
<dbReference type="Pfam" id="PF02801">
    <property type="entry name" value="Ketoacyl-synt_C"/>
    <property type="match status" value="2"/>
</dbReference>
<dbReference type="Pfam" id="PF08659">
    <property type="entry name" value="KR"/>
    <property type="match status" value="2"/>
</dbReference>
<dbReference type="Pfam" id="PF00550">
    <property type="entry name" value="PP-binding"/>
    <property type="match status" value="2"/>
</dbReference>
<dbReference type="Pfam" id="PF00975">
    <property type="entry name" value="Thioesterase"/>
    <property type="match status" value="1"/>
</dbReference>
<dbReference type="SMART" id="SM00827">
    <property type="entry name" value="PKS_AT"/>
    <property type="match status" value="2"/>
</dbReference>
<dbReference type="SMART" id="SM00822">
    <property type="entry name" value="PKS_KR"/>
    <property type="match status" value="2"/>
</dbReference>
<dbReference type="SMART" id="SM00825">
    <property type="entry name" value="PKS_KS"/>
    <property type="match status" value="2"/>
</dbReference>
<dbReference type="SMART" id="SM00823">
    <property type="entry name" value="PKS_PP"/>
    <property type="match status" value="2"/>
</dbReference>
<dbReference type="SMART" id="SM01294">
    <property type="entry name" value="PKS_PP_betabranch"/>
    <property type="match status" value="2"/>
</dbReference>
<dbReference type="SMART" id="SM00824">
    <property type="entry name" value="PKS_TE"/>
    <property type="match status" value="1"/>
</dbReference>
<dbReference type="SUPFAM" id="SSF47336">
    <property type="entry name" value="ACP-like"/>
    <property type="match status" value="2"/>
</dbReference>
<dbReference type="SUPFAM" id="SSF53474">
    <property type="entry name" value="alpha/beta-Hydrolases"/>
    <property type="match status" value="1"/>
</dbReference>
<dbReference type="SUPFAM" id="SSF101173">
    <property type="entry name" value="Docking domain B of the erythromycin polyketide synthase (DEBS)"/>
    <property type="match status" value="1"/>
</dbReference>
<dbReference type="SUPFAM" id="SSF52151">
    <property type="entry name" value="FabD/lysophospholipase-like"/>
    <property type="match status" value="2"/>
</dbReference>
<dbReference type="SUPFAM" id="SSF51735">
    <property type="entry name" value="NAD(P)-binding Rossmann-fold domains"/>
    <property type="match status" value="4"/>
</dbReference>
<dbReference type="SUPFAM" id="SSF55048">
    <property type="entry name" value="Probable ACP-binding domain of malonyl-CoA ACP transacylase"/>
    <property type="match status" value="2"/>
</dbReference>
<dbReference type="SUPFAM" id="SSF53901">
    <property type="entry name" value="Thiolase-like"/>
    <property type="match status" value="2"/>
</dbReference>
<dbReference type="PROSITE" id="PS50075">
    <property type="entry name" value="CARRIER"/>
    <property type="match status" value="2"/>
</dbReference>
<dbReference type="PROSITE" id="PS00606">
    <property type="entry name" value="KS3_1"/>
    <property type="match status" value="2"/>
</dbReference>
<dbReference type="PROSITE" id="PS52004">
    <property type="entry name" value="KS3_2"/>
    <property type="match status" value="2"/>
</dbReference>
<dbReference type="PROSITE" id="PS00012">
    <property type="entry name" value="PHOSPHOPANTETHEINE"/>
    <property type="match status" value="2"/>
</dbReference>
<reference key="1">
    <citation type="journal article" date="1990" name="Nature">
        <title>An unusually large multifunctional polypeptide in the erythromycin-producing polyketide synthase of Saccharopolyspora erythraea.</title>
        <authorList>
            <person name="Cortes J."/>
            <person name="Haydock S.F."/>
            <person name="Roberts G.A."/>
            <person name="Bevitt D.J."/>
            <person name="Leadlay P.F."/>
        </authorList>
    </citation>
    <scope>NUCLEOTIDE SEQUENCE [GENOMIC DNA]</scope>
    <scope>SUBUNIT</scope>
    <source>
        <strain>ATCC 11635 / DSM 40517 / IFO 13426 / JCM 4026 / NCIB 8594</strain>
    </source>
</reference>
<reference key="2">
    <citation type="journal article" date="1991" name="Science">
        <title>Modular organization of genes required for complex polyketide biosynthesis.</title>
        <authorList>
            <person name="Donadio S."/>
            <person name="Staver M.J."/>
            <person name="McAlpine J.B."/>
            <person name="Swanson S.J."/>
            <person name="Katz L."/>
        </authorList>
    </citation>
    <scope>NUCLEOTIDE SEQUENCE [GENOMIC DNA]</scope>
    <scope>SUBUNIT</scope>
</reference>
<reference key="3">
    <citation type="journal article" date="1992" name="Eur. J. Biochem.">
        <title>6-deoxyerythronolide-B synthase 2 from Saccharopolyspora erythraea. Cloning of the structural gene, sequence analysis and inferred domain structure of the multifunctional enzyme.</title>
        <authorList>
            <person name="Bevitt D.J."/>
            <person name="Cortes J."/>
            <person name="Haydock S.F."/>
            <person name="Leadlay P.F."/>
        </authorList>
    </citation>
    <scope>NUCLEOTIDE SEQUENCE [GENOMIC DNA]</scope>
    <source>
        <strain>ATCC 11635 / DSM 40517 / IFO 13426 / JCM 4026 / NCIB 8594</strain>
    </source>
</reference>
<reference key="4">
    <citation type="journal article" date="1992" name="FEBS Lett.">
        <title>Identification of DEBS 1, DEBS 2 and DEBS 3, the multienzyme polypeptides of the erythromycin-producing polyketide synthase from Saccharopolyspora erythraea.</title>
        <authorList>
            <person name="Caffrey P."/>
            <person name="Bevitt D.J."/>
            <person name="Staunton J."/>
            <person name="Leadlay P.F."/>
        </authorList>
    </citation>
    <scope>PROTEIN SEQUENCE OF 2-11</scope>
    <source>
        <strain>CA340</strain>
    </source>
</reference>
<reference key="5">
    <citation type="journal article" date="2007" name="Annu. Rev. Biochem.">
        <title>Structure and mechanism of the 6-deoxyerythronolide B synthase.</title>
        <authorList>
            <person name="Khosla C."/>
            <person name="Tang Y."/>
            <person name="Chen A.Y."/>
            <person name="Schnarr N.A."/>
            <person name="Cane D.E."/>
        </authorList>
    </citation>
    <scope>FUNCTION</scope>
    <scope>PATHWAY</scope>
    <scope>SUBUNIT</scope>
</reference>
<reference key="6">
    <citation type="journal article" date="2010" name="Chem. Biol.">
        <title>Complete biosynthesis of erythromycin A and designed analogs using E. coli as a heterologous host.</title>
        <authorList>
            <person name="Zhang H."/>
            <person name="Wang Y."/>
            <person name="Wu J."/>
            <person name="Skalina K."/>
            <person name="Pfeifer B.A."/>
        </authorList>
    </citation>
    <scope>FUNCTION</scope>
    <scope>CATALYTIC ACTIVITY</scope>
    <scope>PATHWAY</scope>
</reference>
<reference key="7">
    <citation type="journal article" date="2001" name="Proc. Natl. Acad. Sci. U.S.A.">
        <title>Crystal structure of the macrocycle-forming thioesterase domain of the erythromycin polyketide synthase: versatility from a unique substrate channel.</title>
        <authorList>
            <person name="Tsai S.-C."/>
            <person name="Miercke L.J.W."/>
            <person name="Krucinski J."/>
            <person name="Gokhale R."/>
            <person name="Chen J.C.-H."/>
            <person name="Foster P.G."/>
            <person name="Cane D.E."/>
            <person name="Khosla C."/>
            <person name="Stroud R.M."/>
        </authorList>
    </citation>
    <scope>X-RAY CRYSTALLOGRAPHY (2.80 ANGSTROMS) OF 2893-3172</scope>
    <scope>ACTIVE SITE</scope>
    <scope>SUBUNIT</scope>
</reference>
<reference key="8">
    <citation type="journal article" date="2002" name="Biochemistry">
        <title>Insights into channel architecture and substrate specificity from crystal structures of two macrocycle-forming thioesterases of modular polyketide synthases.</title>
        <authorList>
            <person name="Tsai S.-C."/>
            <person name="Lu H."/>
            <person name="Cane D.E."/>
            <person name="Khosla C."/>
            <person name="Stroud R.M."/>
        </authorList>
    </citation>
    <scope>X-RAY CRYSTALLOGRAPHY (3.0 ANGSTROMS) OF 2890-3172</scope>
    <scope>SUBUNIT</scope>
</reference>
<reference key="9">
    <citation type="journal article" date="2006" name="Proc. Natl. Acad. Sci. U.S.A.">
        <title>The 2.7-Angstrom crystal structure of a 194-kDa homodimeric fragment of the 6-deoxyerythronolide B synthase.</title>
        <authorList>
            <person name="Tang Y."/>
            <person name="Kim C.Y."/>
            <person name="Mathews I.I."/>
            <person name="Cane D.E."/>
            <person name="Khosla C."/>
        </authorList>
    </citation>
    <scope>X-RAY CRYSTALLOGRAPHY (2.73 ANGSTROMS) OF 1-917</scope>
    <scope>COFACTOR</scope>
    <scope>ACTIVE SITE</scope>
    <scope>SUBUNIT</scope>
</reference>
<reference key="10">
    <citation type="journal article" date="2016" name="Biochim. Biophys. Acta">
        <title>Towards a characterization of the structural determinants of specificity in the macrocyclizing thioesterase for deoxyerythronolide B biosynthesis.</title>
        <authorList>
            <person name="Argyropoulos P."/>
            <person name="Bergeret F."/>
            <person name="Pardin C."/>
            <person name="Reimer J.M."/>
            <person name="Pinto A."/>
            <person name="Boddy C.N."/>
            <person name="Schmeing T.M."/>
        </authorList>
    </citation>
    <scope>X-RAY CRYSTALLOGRAPHY (1.70 ANGSTROMS) OF 2904-3172 IN COMPLEX WITH SUBSTRATE ANALOG</scope>
    <scope>ACTIVITY REGULATION</scope>
    <scope>ACTIVE SITE</scope>
</reference>
<protein>
    <recommendedName>
        <fullName evidence="15">Erythronolide synthase EryA3</fullName>
        <ecNumber evidence="12">2.3.1.94</ecNumber>
    </recommendedName>
    <alternativeName>
        <fullName evidence="14">6-deoxyerythronolide B synthase III</fullName>
    </alternativeName>
    <alternativeName>
        <fullName evidence="15">6-deoxyerythronolide-B synthase EryA3, modules 5 and 6</fullName>
        <shortName evidence="14">DEBS 3</shortName>
    </alternativeName>
    <alternativeName>
        <fullName evidence="14">ORF C</fullName>
    </alternativeName>
</protein>
<organism>
    <name type="scientific">Saccharopolyspora erythraea</name>
    <name type="common">Streptomyces erythraeus</name>
    <dbReference type="NCBI Taxonomy" id="1836"/>
    <lineage>
        <taxon>Bacteria</taxon>
        <taxon>Bacillati</taxon>
        <taxon>Actinomycetota</taxon>
        <taxon>Actinomycetes</taxon>
        <taxon>Pseudonocardiales</taxon>
        <taxon>Pseudonocardiaceae</taxon>
        <taxon>Saccharopolyspora</taxon>
    </lineage>
</organism>